<name>PSBA_BIGNA</name>
<sequence length="344" mass="38199">MTAIIERRENSSLWARFCEWITSTENRLYIGWFGVLMVPTLLTATTVFIIGFIAAPPVDIDGIREPVSGSLLYGNNIISGAIVPTSNAIGLHFYPIWEAASVDEWLYNGGPYQMIVCHFFIGVCSYMGREWELSFRLGMRPWIAVAYSAPVAAATAVFIIYPIGQGSFSDGMPLGISGTFNFMIVFQAEHNILMHPFHMLGVAGVFGGSLFSAMHGSLVTSSLIRQTTENESTNNGYVFGQEEETYNIVAAHGYFGRLIFQYASFNNSRSLHFFLAAWPVIGIWFTAMGISTMAFNLNGFNFNQSIIDSQGRVINSWADIINRANLGMEVMHERNAHNFPLDLA</sequence>
<reference key="1">
    <citation type="journal article" date="2007" name="Mol. Biol. Evol.">
        <title>The complete chloroplast genome of the chlorarachniophyte Bigelowiella natans: evidence for independent origins of chlorarachniophyte and euglenid secondary endosymbionts.</title>
        <authorList>
            <person name="Rogers M.B."/>
            <person name="Gilson P.R."/>
            <person name="Su V."/>
            <person name="McFadden G.I."/>
            <person name="Keeling P.J."/>
        </authorList>
    </citation>
    <scope>NUCLEOTIDE SEQUENCE [LARGE SCALE GENOMIC DNA]</scope>
</reference>
<organism>
    <name type="scientific">Bigelowiella natans</name>
    <name type="common">Pedinomonas minutissima</name>
    <name type="synonym">Chlorarachnion sp. (strain CCMP621)</name>
    <dbReference type="NCBI Taxonomy" id="227086"/>
    <lineage>
        <taxon>Eukaryota</taxon>
        <taxon>Sar</taxon>
        <taxon>Rhizaria</taxon>
        <taxon>Cercozoa</taxon>
        <taxon>Chlorarachniophyceae</taxon>
        <taxon>Bigelowiella</taxon>
    </lineage>
</organism>
<accession>Q06J41</accession>
<gene>
    <name evidence="1" type="primary">psbA</name>
</gene>
<geneLocation type="chloroplast"/>
<evidence type="ECO:0000255" key="1">
    <source>
        <dbReference type="HAMAP-Rule" id="MF_01379"/>
    </source>
</evidence>
<evidence type="ECO:0000305" key="2"/>
<keyword id="KW-0106">Calcium</keyword>
<keyword id="KW-0148">Chlorophyll</keyword>
<keyword id="KW-0150">Chloroplast</keyword>
<keyword id="KW-0157">Chromophore</keyword>
<keyword id="KW-0249">Electron transport</keyword>
<keyword id="KW-0359">Herbicide resistance</keyword>
<keyword id="KW-0408">Iron</keyword>
<keyword id="KW-0460">Magnesium</keyword>
<keyword id="KW-0464">Manganese</keyword>
<keyword id="KW-0472">Membrane</keyword>
<keyword id="KW-0479">Metal-binding</keyword>
<keyword id="KW-0560">Oxidoreductase</keyword>
<keyword id="KW-0602">Photosynthesis</keyword>
<keyword id="KW-0604">Photosystem II</keyword>
<keyword id="KW-0934">Plastid</keyword>
<keyword id="KW-0793">Thylakoid</keyword>
<keyword id="KW-0812">Transmembrane</keyword>
<keyword id="KW-1133">Transmembrane helix</keyword>
<keyword id="KW-0813">Transport</keyword>
<comment type="function">
    <text evidence="1">Photosystem II (PSII) is a light-driven water:plastoquinone oxidoreductase that uses light energy to abstract electrons from H(2)O, generating O(2) and a proton gradient subsequently used for ATP formation. It consists of a core antenna complex that captures photons, and an electron transfer chain that converts photonic excitation into a charge separation. The D1/D2 (PsbA/PsbD) reaction center heterodimer binds P680, the primary electron donor of PSII as well as several subsequent electron acceptors.</text>
</comment>
<comment type="catalytic activity">
    <reaction evidence="1">
        <text>2 a plastoquinone + 4 hnu + 2 H2O = 2 a plastoquinol + O2</text>
        <dbReference type="Rhea" id="RHEA:36359"/>
        <dbReference type="Rhea" id="RHEA-COMP:9561"/>
        <dbReference type="Rhea" id="RHEA-COMP:9562"/>
        <dbReference type="ChEBI" id="CHEBI:15377"/>
        <dbReference type="ChEBI" id="CHEBI:15379"/>
        <dbReference type="ChEBI" id="CHEBI:17757"/>
        <dbReference type="ChEBI" id="CHEBI:30212"/>
        <dbReference type="ChEBI" id="CHEBI:62192"/>
        <dbReference type="EC" id="1.10.3.9"/>
    </reaction>
</comment>
<comment type="cofactor">
    <text evidence="1">The D1/D2 heterodimer binds P680, chlorophylls that are the primary electron donor of PSII, and subsequent electron acceptors. It shares a non-heme iron and each subunit binds pheophytin, quinone, additional chlorophylls, carotenoids and lipids. D1 provides most of the ligands for the Mn4-Ca-O5 cluster of the oxygen-evolving complex (OEC). There is also a Cl(-1) ion associated with D1 and D2, which is required for oxygen evolution. The PSII complex binds additional chlorophylls, carotenoids and specific lipids.</text>
</comment>
<comment type="subunit">
    <text evidence="2">PSII is composed of 1 copy each of membrane proteins PsbA, PsbB, PsbC, PsbD, PsbE, PsbF, PsbH, PsbI, PsbJ, PsbK, PsbL, PsbM, PsbT, PsbY, PsbZ, Psb30/Ycf12, at least 3 peripheral proteins of the oxygen-evolving complex and a large number of cofactors. It forms dimeric complexes.</text>
</comment>
<comment type="subcellular location">
    <subcellularLocation>
        <location evidence="1">Plastid</location>
        <location evidence="1">Chloroplast thylakoid membrane</location>
        <topology evidence="1">Multi-pass membrane protein</topology>
    </subcellularLocation>
</comment>
<comment type="PTM">
    <text evidence="1">Tyr-161 forms a radical intermediate that is referred to as redox-active TyrZ, YZ or Y-Z.</text>
</comment>
<comment type="miscellaneous">
    <text evidence="1">2 of the reaction center chlorophylls (ChlD1 and ChlD2) are entirely coordinated by water.</text>
</comment>
<comment type="miscellaneous">
    <text evidence="1">Herbicides such as atrazine, BNT, diuron or ioxynil bind in the Q(B) binding site and block subsequent electron transfer.</text>
</comment>
<comment type="similarity">
    <text evidence="1">Belongs to the reaction center PufL/M/PsbA/D family.</text>
</comment>
<protein>
    <recommendedName>
        <fullName evidence="1">Photosystem II protein D1</fullName>
        <shortName evidence="1">PSII D1 protein</shortName>
        <ecNumber evidence="1">1.10.3.9</ecNumber>
    </recommendedName>
    <alternativeName>
        <fullName evidence="1">Photosystem II Q(B) protein</fullName>
    </alternativeName>
</protein>
<feature type="chain" id="PRO_0000310408" description="Photosystem II protein D1" evidence="1">
    <location>
        <begin position="1"/>
        <end position="344"/>
    </location>
</feature>
<feature type="transmembrane region" description="Helical" evidence="1">
    <location>
        <begin position="29"/>
        <end position="46"/>
    </location>
</feature>
<feature type="transmembrane region" description="Helical" evidence="1">
    <location>
        <begin position="118"/>
        <end position="133"/>
    </location>
</feature>
<feature type="transmembrane region" description="Helical" evidence="1">
    <location>
        <begin position="142"/>
        <end position="156"/>
    </location>
</feature>
<feature type="transmembrane region" description="Helical" evidence="1">
    <location>
        <begin position="197"/>
        <end position="218"/>
    </location>
</feature>
<feature type="transmembrane region" description="Helical" evidence="1">
    <location>
        <begin position="274"/>
        <end position="288"/>
    </location>
</feature>
<feature type="binding site" description="axial binding residue" evidence="1">
    <location>
        <position position="118"/>
    </location>
    <ligand>
        <name>chlorophyll a</name>
        <dbReference type="ChEBI" id="CHEBI:58416"/>
        <label>ChlzD1</label>
    </ligand>
    <ligandPart>
        <name>Mg</name>
        <dbReference type="ChEBI" id="CHEBI:25107"/>
    </ligandPart>
</feature>
<feature type="binding site" evidence="1">
    <location>
        <position position="126"/>
    </location>
    <ligand>
        <name>pheophytin a</name>
        <dbReference type="ChEBI" id="CHEBI:136840"/>
        <label>D1</label>
    </ligand>
</feature>
<feature type="binding site" evidence="1">
    <location>
        <position position="170"/>
    </location>
    <ligand>
        <name>[CaMn4O5] cluster</name>
        <dbReference type="ChEBI" id="CHEBI:189552"/>
    </ligand>
</feature>
<feature type="binding site" evidence="1">
    <location>
        <position position="189"/>
    </location>
    <ligand>
        <name>[CaMn4O5] cluster</name>
        <dbReference type="ChEBI" id="CHEBI:189552"/>
    </ligand>
</feature>
<feature type="binding site" description="axial binding residue" evidence="1">
    <location>
        <position position="198"/>
    </location>
    <ligand>
        <name>chlorophyll a</name>
        <dbReference type="ChEBI" id="CHEBI:58416"/>
        <label>PD1</label>
    </ligand>
    <ligandPart>
        <name>Mg</name>
        <dbReference type="ChEBI" id="CHEBI:25107"/>
    </ligandPart>
</feature>
<feature type="binding site" evidence="1">
    <location>
        <position position="215"/>
    </location>
    <ligand>
        <name>a quinone</name>
        <dbReference type="ChEBI" id="CHEBI:132124"/>
        <label>B</label>
    </ligand>
</feature>
<feature type="binding site" evidence="1">
    <location>
        <position position="215"/>
    </location>
    <ligand>
        <name>Fe cation</name>
        <dbReference type="ChEBI" id="CHEBI:24875"/>
        <note>ligand shared with heterodimeric partner</note>
    </ligand>
</feature>
<feature type="binding site" evidence="1">
    <location>
        <begin position="264"/>
        <end position="265"/>
    </location>
    <ligand>
        <name>a quinone</name>
        <dbReference type="ChEBI" id="CHEBI:132124"/>
        <label>B</label>
    </ligand>
</feature>
<feature type="binding site" evidence="1">
    <location>
        <position position="272"/>
    </location>
    <ligand>
        <name>Fe cation</name>
        <dbReference type="ChEBI" id="CHEBI:24875"/>
        <note>ligand shared with heterodimeric partner</note>
    </ligand>
</feature>
<feature type="binding site" evidence="1">
    <location>
        <position position="332"/>
    </location>
    <ligand>
        <name>[CaMn4O5] cluster</name>
        <dbReference type="ChEBI" id="CHEBI:189552"/>
    </ligand>
</feature>
<feature type="binding site" evidence="1">
    <location>
        <position position="333"/>
    </location>
    <ligand>
        <name>[CaMn4O5] cluster</name>
        <dbReference type="ChEBI" id="CHEBI:189552"/>
    </ligand>
</feature>
<feature type="binding site" evidence="1">
    <location>
        <position position="342"/>
    </location>
    <ligand>
        <name>[CaMn4O5] cluster</name>
        <dbReference type="ChEBI" id="CHEBI:189552"/>
    </ligand>
</feature>
<feature type="binding site" evidence="1">
    <location>
        <position position="344"/>
    </location>
    <ligand>
        <name>[CaMn4O5] cluster</name>
        <dbReference type="ChEBI" id="CHEBI:189552"/>
    </ligand>
</feature>
<feature type="site" description="Tyrosine radical intermediate" evidence="1">
    <location>
        <position position="161"/>
    </location>
</feature>
<feature type="site" description="Stabilizes free radical intermediate" evidence="1">
    <location>
        <position position="190"/>
    </location>
</feature>
<proteinExistence type="inferred from homology"/>
<dbReference type="EC" id="1.10.3.9" evidence="1"/>
<dbReference type="EMBL" id="DQ851108">
    <property type="protein sequence ID" value="ABG91418.1"/>
    <property type="molecule type" value="Genomic_DNA"/>
</dbReference>
<dbReference type="RefSeq" id="YP_778586.1">
    <property type="nucleotide sequence ID" value="NC_008408.1"/>
</dbReference>
<dbReference type="SMR" id="Q06J41"/>
<dbReference type="GeneID" id="4353003"/>
<dbReference type="GO" id="GO:0009535">
    <property type="term" value="C:chloroplast thylakoid membrane"/>
    <property type="evidence" value="ECO:0007669"/>
    <property type="project" value="UniProtKB-SubCell"/>
</dbReference>
<dbReference type="GO" id="GO:0009523">
    <property type="term" value="C:photosystem II"/>
    <property type="evidence" value="ECO:0007669"/>
    <property type="project" value="UniProtKB-KW"/>
</dbReference>
<dbReference type="GO" id="GO:0016168">
    <property type="term" value="F:chlorophyll binding"/>
    <property type="evidence" value="ECO:0007669"/>
    <property type="project" value="UniProtKB-UniRule"/>
</dbReference>
<dbReference type="GO" id="GO:0045156">
    <property type="term" value="F:electron transporter, transferring electrons within the cyclic electron transport pathway of photosynthesis activity"/>
    <property type="evidence" value="ECO:0007669"/>
    <property type="project" value="InterPro"/>
</dbReference>
<dbReference type="GO" id="GO:0005506">
    <property type="term" value="F:iron ion binding"/>
    <property type="evidence" value="ECO:0007669"/>
    <property type="project" value="UniProtKB-UniRule"/>
</dbReference>
<dbReference type="GO" id="GO:0016682">
    <property type="term" value="F:oxidoreductase activity, acting on diphenols and related substances as donors, oxygen as acceptor"/>
    <property type="evidence" value="ECO:0007669"/>
    <property type="project" value="UniProtKB-UniRule"/>
</dbReference>
<dbReference type="GO" id="GO:0009772">
    <property type="term" value="P:photosynthetic electron transport in photosystem II"/>
    <property type="evidence" value="ECO:0007669"/>
    <property type="project" value="InterPro"/>
</dbReference>
<dbReference type="GO" id="GO:0009635">
    <property type="term" value="P:response to herbicide"/>
    <property type="evidence" value="ECO:0007669"/>
    <property type="project" value="UniProtKB-KW"/>
</dbReference>
<dbReference type="CDD" id="cd09289">
    <property type="entry name" value="Photosystem-II_D1"/>
    <property type="match status" value="1"/>
</dbReference>
<dbReference type="FunFam" id="1.20.85.10:FF:000002">
    <property type="entry name" value="Photosystem II protein D1"/>
    <property type="match status" value="1"/>
</dbReference>
<dbReference type="Gene3D" id="1.20.85.10">
    <property type="entry name" value="Photosystem II protein D1-like"/>
    <property type="match status" value="1"/>
</dbReference>
<dbReference type="HAMAP" id="MF_01379">
    <property type="entry name" value="PSII_PsbA_D1"/>
    <property type="match status" value="1"/>
</dbReference>
<dbReference type="InterPro" id="IPR055266">
    <property type="entry name" value="D1/D2"/>
</dbReference>
<dbReference type="InterPro" id="IPR036854">
    <property type="entry name" value="Photo_II_D1/D2_sf"/>
</dbReference>
<dbReference type="InterPro" id="IPR000484">
    <property type="entry name" value="Photo_RC_L/M"/>
</dbReference>
<dbReference type="InterPro" id="IPR055265">
    <property type="entry name" value="Photo_RC_L/M_CS"/>
</dbReference>
<dbReference type="InterPro" id="IPR005867">
    <property type="entry name" value="PSII_D1"/>
</dbReference>
<dbReference type="NCBIfam" id="TIGR01151">
    <property type="entry name" value="psbA"/>
    <property type="match status" value="1"/>
</dbReference>
<dbReference type="PANTHER" id="PTHR33149:SF12">
    <property type="entry name" value="PHOTOSYSTEM II D2 PROTEIN"/>
    <property type="match status" value="1"/>
</dbReference>
<dbReference type="PANTHER" id="PTHR33149">
    <property type="entry name" value="PHOTOSYSTEM II PROTEIN D1"/>
    <property type="match status" value="1"/>
</dbReference>
<dbReference type="Pfam" id="PF00124">
    <property type="entry name" value="Photo_RC"/>
    <property type="match status" value="1"/>
</dbReference>
<dbReference type="PRINTS" id="PR00256">
    <property type="entry name" value="REACTNCENTRE"/>
</dbReference>
<dbReference type="SUPFAM" id="SSF81483">
    <property type="entry name" value="Bacterial photosystem II reaction centre, L and M subunits"/>
    <property type="match status" value="1"/>
</dbReference>
<dbReference type="PROSITE" id="PS00244">
    <property type="entry name" value="REACTION_CENTER"/>
    <property type="match status" value="1"/>
</dbReference>